<accession>Q5PQ25</accession>
<organism>
    <name type="scientific">Xenopus laevis</name>
    <name type="common">African clawed frog</name>
    <dbReference type="NCBI Taxonomy" id="8355"/>
    <lineage>
        <taxon>Eukaryota</taxon>
        <taxon>Metazoa</taxon>
        <taxon>Chordata</taxon>
        <taxon>Craniata</taxon>
        <taxon>Vertebrata</taxon>
        <taxon>Euteleostomi</taxon>
        <taxon>Amphibia</taxon>
        <taxon>Batrachia</taxon>
        <taxon>Anura</taxon>
        <taxon>Pipoidea</taxon>
        <taxon>Pipidae</taxon>
        <taxon>Xenopodinae</taxon>
        <taxon>Xenopus</taxon>
        <taxon>Xenopus</taxon>
    </lineage>
</organism>
<feature type="chain" id="PRO_0000337049" description="Inhibitory synaptic factor 1">
    <location>
        <begin position="1"/>
        <end position="247"/>
    </location>
</feature>
<feature type="region of interest" description="Disordered" evidence="4">
    <location>
        <begin position="69"/>
        <end position="90"/>
    </location>
</feature>
<feature type="region of interest" description="Disordered" evidence="4">
    <location>
        <begin position="112"/>
        <end position="166"/>
    </location>
</feature>
<feature type="region of interest" description="Disordered" evidence="4">
    <location>
        <begin position="180"/>
        <end position="217"/>
    </location>
</feature>
<feature type="coiled-coil region" evidence="3">
    <location>
        <begin position="30"/>
        <end position="65"/>
    </location>
</feature>
<feature type="compositionally biased region" description="Polar residues" evidence="4">
    <location>
        <begin position="76"/>
        <end position="85"/>
    </location>
</feature>
<reference key="1">
    <citation type="submission" date="2004-12" db="EMBL/GenBank/DDBJ databases">
        <authorList>
            <consortium name="NIH - Xenopus Gene Collection (XGC) project"/>
        </authorList>
    </citation>
    <scope>NUCLEOTIDE SEQUENCE [LARGE SCALE MRNA]</scope>
    <source>
        <tissue>Testis</tissue>
    </source>
</reference>
<keyword id="KW-0175">Coiled coil</keyword>
<keyword id="KW-1185">Reference proteome</keyword>
<keyword id="KW-0770">Synapse</keyword>
<evidence type="ECO:0000250" key="1">
    <source>
        <dbReference type="UniProtKB" id="Q2T9L4"/>
    </source>
</evidence>
<evidence type="ECO:0000250" key="2">
    <source>
        <dbReference type="UniProtKB" id="Q8CD60"/>
    </source>
</evidence>
<evidence type="ECO:0000255" key="3"/>
<evidence type="ECO:0000256" key="4">
    <source>
        <dbReference type="SAM" id="MobiDB-lite"/>
    </source>
</evidence>
<evidence type="ECO:0000305" key="5"/>
<sequence length="247" mass="26850">MCSRGVGRTTEQGIRIGRAGERERIRGRVRAVIGQLEGILRDLKEVAKELKEVVEQIDRLTSDFEFELDTDDWTPGTVSSTSSSEKGGPLCDLGPLDFLSSDSWEFCSFLEASTPSDSGDGSDRPPDFRLLNGGVTPNGPDSSSEEIPIAQQKPPPSKNSGSRDRVRFSDKVLYHALCCDDSEDPPYGQETPRDPPRATAPCAVMKSKPGGLTGVRKGTRNCSTQTVCDKSTQTVLPYVPKKGKDKL</sequence>
<name>INSY1_XENLA</name>
<gene>
    <name evidence="1" type="primary">insy1</name>
</gene>
<proteinExistence type="evidence at transcript level"/>
<dbReference type="EMBL" id="BC087394">
    <property type="protein sequence ID" value="AAH87394.1"/>
    <property type="molecule type" value="mRNA"/>
</dbReference>
<dbReference type="RefSeq" id="NP_001088740.1">
    <property type="nucleotide sequence ID" value="NM_001095271.1"/>
</dbReference>
<dbReference type="RefSeq" id="XP_018106657.1">
    <property type="nucleotide sequence ID" value="XM_018251168.1"/>
</dbReference>
<dbReference type="RefSeq" id="XP_018106658.1">
    <property type="nucleotide sequence ID" value="XM_018251169.1"/>
</dbReference>
<dbReference type="RefSeq" id="XP_018106659.1">
    <property type="nucleotide sequence ID" value="XM_018251170.1"/>
</dbReference>
<dbReference type="SMR" id="Q5PQ25"/>
<dbReference type="DNASU" id="496004"/>
<dbReference type="GeneID" id="496004"/>
<dbReference type="KEGG" id="xla:496004"/>
<dbReference type="AGR" id="Xenbase:XB-GENE-5931911"/>
<dbReference type="CTD" id="496004"/>
<dbReference type="Xenbase" id="XB-GENE-5931911">
    <property type="gene designation" value="insyn1.L"/>
</dbReference>
<dbReference type="OMA" id="HSLLYNC"/>
<dbReference type="OrthoDB" id="9946710at2759"/>
<dbReference type="Proteomes" id="UP000186698">
    <property type="component" value="Chromosome 3L"/>
</dbReference>
<dbReference type="Bgee" id="496004">
    <property type="expression patterns" value="Expressed in brain and 6 other cell types or tissues"/>
</dbReference>
<dbReference type="GO" id="GO:0014069">
    <property type="term" value="C:postsynaptic density"/>
    <property type="evidence" value="ECO:0000318"/>
    <property type="project" value="GO_Central"/>
</dbReference>
<dbReference type="GO" id="GO:0060080">
    <property type="term" value="P:inhibitory postsynaptic potential"/>
    <property type="evidence" value="ECO:0000318"/>
    <property type="project" value="GO_Central"/>
</dbReference>
<dbReference type="InterPro" id="IPR027997">
    <property type="entry name" value="Largen/INSYN1"/>
</dbReference>
<dbReference type="PANTHER" id="PTHR15917">
    <property type="match status" value="1"/>
</dbReference>
<dbReference type="PANTHER" id="PTHR15917:SF3">
    <property type="entry name" value="INHIBITORY SYNAPTIC FACTOR 1"/>
    <property type="match status" value="1"/>
</dbReference>
<dbReference type="Pfam" id="PF15252">
    <property type="entry name" value="DUF4589"/>
    <property type="match status" value="1"/>
</dbReference>
<protein>
    <recommendedName>
        <fullName evidence="5">Inhibitory synaptic factor 1</fullName>
        <shortName evidence="2">InSyn1</shortName>
    </recommendedName>
</protein>
<comment type="function">
    <text evidence="2">May be a component of the protein machinery at the inhibitory synapses, probably acting as a scaffold.</text>
</comment>
<comment type="subcellular location">
    <subcellularLocation>
        <location evidence="2">Postsynaptic density</location>
    </subcellularLocation>
</comment>
<comment type="similarity">
    <text evidence="5">Belongs to the INSYN1 family.</text>
</comment>